<name>AFLR_ASPPU</name>
<proteinExistence type="evidence at protein level"/>
<accession>Q6UEG8</accession>
<gene>
    <name evidence="16" type="primary">aflR</name>
    <name evidence="17" type="synonym">apa-2</name>
</gene>
<organism>
    <name type="scientific">Aspergillus parasiticus (strain ATCC 56775 / NRRL 5862 / SRRC 143 / SU-1)</name>
    <dbReference type="NCBI Taxonomy" id="1403190"/>
    <lineage>
        <taxon>Eukaryota</taxon>
        <taxon>Fungi</taxon>
        <taxon>Dikarya</taxon>
        <taxon>Ascomycota</taxon>
        <taxon>Pezizomycotina</taxon>
        <taxon>Eurotiomycetes</taxon>
        <taxon>Eurotiomycetidae</taxon>
        <taxon>Eurotiales</taxon>
        <taxon>Aspergillaceae</taxon>
        <taxon>Aspergillus</taxon>
        <taxon>Aspergillus subgen. Circumdati</taxon>
    </lineage>
</organism>
<comment type="function">
    <text evidence="3 4 5 6 7 9 11 12 14 15">Transcription factor involved in regulation of the aflatoxin biosynthesis gene cluster (PubMed:11913765, PubMed:12655397, PubMed:15006741, PubMed:15054098, PubMed:23342682, PubMed:23605486, PubMed:7793958, PubMed:8250554). Binds with its co-regulator aflS to AFLR1 elements (5'-TCGSWNNSCGR-3') present in the promoters of the aflatoxin cluster genes (PubMed:10216264, PubMed:15746358). The ratio of the expression data between aflS:aflR plays a crucial role in the regulation of aflatoxins production (PubMed:23605486). A high ratio, produced at a range between 17 and 30 degrees Celsius, corresponds with the production profile of aflatoxin G1 biosynthesis (PubMed:23605486). A low ratio, produced over 30 degrees Celsius, is related to aflatoxin B1 biosynthesis (PubMed:23605486).</text>
</comment>
<comment type="subunit">
    <text evidence="5 7 11">Interacts with its co-regulator aflS (PubMed:12655397, PubMed:15054098, PubMed:23342682).</text>
</comment>
<comment type="subcellular location">
    <subcellularLocation>
        <location evidence="11">Nucleus</location>
    </subcellularLocation>
    <subcellularLocation>
        <location evidence="11">Endosome</location>
    </subcellularLocation>
</comment>
<comment type="induction">
    <text evidence="8 10 13">Expression is positively regulated by the developmental and secondary metabolism regulator veA (PubMed:15294809). Expression is repressed during Streptomyces-Aspergillus interactions (PubMed:25741015). Expression is also repressed by curcumin (PubMed:23113196).</text>
</comment>
<protein>
    <recommendedName>
        <fullName evidence="18">Aflatoxin biosynthesis regulatory protein</fullName>
    </recommendedName>
    <alternativeName>
        <fullName evidence="16">Aflatoxin biosynthesis protein R</fullName>
    </alternativeName>
</protein>
<dbReference type="EMBL" id="AY371490">
    <property type="protein sequence ID" value="AAS66018.1"/>
    <property type="molecule type" value="Genomic_DNA"/>
</dbReference>
<dbReference type="EMBL" id="JZEE01000729">
    <property type="status" value="NOT_ANNOTATED_CDS"/>
    <property type="molecule type" value="Genomic_DNA"/>
</dbReference>
<dbReference type="SMR" id="Q6UEG8"/>
<dbReference type="STRING" id="1403190.Q6UEG8"/>
<dbReference type="Proteomes" id="UP000033540">
    <property type="component" value="Unassembled WGS sequence"/>
</dbReference>
<dbReference type="GO" id="GO:0005768">
    <property type="term" value="C:endosome"/>
    <property type="evidence" value="ECO:0007669"/>
    <property type="project" value="UniProtKB-SubCell"/>
</dbReference>
<dbReference type="GO" id="GO:0005634">
    <property type="term" value="C:nucleus"/>
    <property type="evidence" value="ECO:0007669"/>
    <property type="project" value="UniProtKB-SubCell"/>
</dbReference>
<dbReference type="GO" id="GO:0003677">
    <property type="term" value="F:DNA binding"/>
    <property type="evidence" value="ECO:0007669"/>
    <property type="project" value="UniProtKB-KW"/>
</dbReference>
<dbReference type="GO" id="GO:0000981">
    <property type="term" value="F:DNA-binding transcription factor activity, RNA polymerase II-specific"/>
    <property type="evidence" value="ECO:0007669"/>
    <property type="project" value="InterPro"/>
</dbReference>
<dbReference type="GO" id="GO:0008270">
    <property type="term" value="F:zinc ion binding"/>
    <property type="evidence" value="ECO:0007669"/>
    <property type="project" value="InterPro"/>
</dbReference>
<dbReference type="GO" id="GO:0045122">
    <property type="term" value="P:aflatoxin biosynthetic process"/>
    <property type="evidence" value="ECO:0007669"/>
    <property type="project" value="InterPro"/>
</dbReference>
<dbReference type="GO" id="GO:1900179">
    <property type="term" value="P:positive regulation of aflatoxin biosynthetic process"/>
    <property type="evidence" value="ECO:0000314"/>
    <property type="project" value="GO_Central"/>
</dbReference>
<dbReference type="CDD" id="cd00067">
    <property type="entry name" value="GAL4"/>
    <property type="match status" value="1"/>
</dbReference>
<dbReference type="Gene3D" id="4.10.240.10">
    <property type="entry name" value="Zn(2)-C6 fungal-type DNA-binding domain"/>
    <property type="match status" value="1"/>
</dbReference>
<dbReference type="InterPro" id="IPR013700">
    <property type="entry name" value="AflR"/>
</dbReference>
<dbReference type="InterPro" id="IPR050675">
    <property type="entry name" value="OAF3"/>
</dbReference>
<dbReference type="InterPro" id="IPR036864">
    <property type="entry name" value="Zn2-C6_fun-type_DNA-bd_sf"/>
</dbReference>
<dbReference type="InterPro" id="IPR001138">
    <property type="entry name" value="Zn2Cys6_DnaBD"/>
</dbReference>
<dbReference type="PANTHER" id="PTHR31069:SF31">
    <property type="entry name" value="MONODICTYPHENONE CLUSTER TRANSCRIPTION FACTOR-RELATED"/>
    <property type="match status" value="1"/>
</dbReference>
<dbReference type="PANTHER" id="PTHR31069">
    <property type="entry name" value="OLEATE-ACTIVATED TRANSCRIPTION FACTOR 1-RELATED"/>
    <property type="match status" value="1"/>
</dbReference>
<dbReference type="Pfam" id="PF08493">
    <property type="entry name" value="AflR"/>
    <property type="match status" value="1"/>
</dbReference>
<dbReference type="Pfam" id="PF00172">
    <property type="entry name" value="Zn_clus"/>
    <property type="match status" value="1"/>
</dbReference>
<dbReference type="PRINTS" id="PR00755">
    <property type="entry name" value="AFLATOXINBRP"/>
</dbReference>
<dbReference type="SMART" id="SM00066">
    <property type="entry name" value="GAL4"/>
    <property type="match status" value="1"/>
</dbReference>
<dbReference type="SUPFAM" id="SSF57701">
    <property type="entry name" value="Zn2/Cys6 DNA-binding domain"/>
    <property type="match status" value="1"/>
</dbReference>
<dbReference type="PROSITE" id="PS00463">
    <property type="entry name" value="ZN2_CY6_FUNGAL_1"/>
    <property type="match status" value="1"/>
</dbReference>
<dbReference type="PROSITE" id="PS50048">
    <property type="entry name" value="ZN2_CY6_FUNGAL_2"/>
    <property type="match status" value="1"/>
</dbReference>
<reference key="1">
    <citation type="journal article" date="1993" name="Appl. Environ. Microbiol.">
        <title>Cloning of the Aspergillus parasiticus apa-2 gene associated with the regulation of aflatoxin biosynthesis.</title>
        <authorList>
            <person name="Chang P.-K."/>
            <person name="Cary J.W."/>
            <person name="Bhatnagar D."/>
            <person name="Cleveland T.E."/>
            <person name="Bennett J.W."/>
            <person name="Linz J.E."/>
            <person name="Woloshuk C.P."/>
            <person name="Payne G.A."/>
        </authorList>
    </citation>
    <scope>NUCLEOTIDE SEQUENCE [GENOMIC DNA]</scope>
    <scope>FUNCTION</scope>
    <source>
        <strain>ATCC 56775 / NRRL 5862 / SRRC 143 / SU-1</strain>
    </source>
</reference>
<reference key="2">
    <citation type="journal article" date="2004" name="Appl. Environ. Microbiol.">
        <title>Clustered pathway genes in aflatoxin biosynthesis.</title>
        <authorList>
            <person name="Yu J."/>
            <person name="Chang P.K."/>
            <person name="Ehrlich K.C."/>
            <person name="Cary J.W."/>
            <person name="Bhatnagar D."/>
            <person name="Cleveland T.E."/>
            <person name="Payne G.A."/>
            <person name="Linz J.E."/>
            <person name="Woloshuk C.P."/>
            <person name="Bennett J.W."/>
        </authorList>
    </citation>
    <scope>NUCLEOTIDE SEQUENCE [GENOMIC DNA]</scope>
    <scope>FUNCTION</scope>
    <scope>NOMENCLATURE</scope>
    <source>
        <strain>ATCC 56775 / NRRL 5862 / SRRC 143 / SU-1</strain>
    </source>
</reference>
<reference key="3">
    <citation type="journal article" date="2004" name="FEBS Lett.">
        <title>Completed sequence of aflatoxin pathway gene cluster in Aspergillus parasiticus.</title>
        <authorList>
            <person name="Yu J."/>
            <person name="Bhatnagar D."/>
            <person name="Cleveland T.E."/>
        </authorList>
    </citation>
    <scope>NUCLEOTIDE SEQUENCE [GENOMIC DNA]</scope>
    <source>
        <strain>ATCC 56775 / NRRL 5862 / SRRC 143 / SU-1</strain>
    </source>
</reference>
<reference key="4">
    <citation type="submission" date="2015-02" db="EMBL/GenBank/DDBJ databases">
        <title>Draft genome sequence of Aspergillus parasiticus SU-1.</title>
        <authorList>
            <person name="Yu J."/>
            <person name="Fedorova N."/>
            <person name="Yin Y."/>
            <person name="Losada L."/>
            <person name="Zafar N."/>
            <person name="Taujale R."/>
            <person name="Ehrlich K.C."/>
            <person name="Bhatnagar D."/>
            <person name="Cleveland T.E."/>
            <person name="Bennett J.W."/>
            <person name="Nierman W.C."/>
        </authorList>
    </citation>
    <scope>NUCLEOTIDE SEQUENCE [LARGE SCALE GENOMIC DNA]</scope>
    <source>
        <strain>ATCC 56775 / NRRL 5862 / SRRC 143 / SU-1</strain>
    </source>
</reference>
<reference key="5">
    <citation type="journal article" date="1995" name="Appl. Environ. Microbiol.">
        <title>Increased expression of Aspergillus parasiticus aflR, encoding a sequence-specific DNA-binding protein, relieves nitrate inhibition of aflatoxin biosynthesis.</title>
        <authorList>
            <person name="Chang P.K."/>
            <person name="Ehrlich K.C."/>
            <person name="Yu J."/>
            <person name="Bhatnagar D."/>
            <person name="Cleveland T.E."/>
        </authorList>
    </citation>
    <scope>FUNCTION</scope>
</reference>
<reference key="6">
    <citation type="journal article" date="1999" name="Gene">
        <title>Binding of the C6-zinc cluster protein, AFLR, to the promoters of aflatoxin pathway biosynthesis genes in Aspergillus parasiticus.</title>
        <authorList>
            <person name="Ehrlich K.C."/>
            <person name="Montalbano B.G."/>
            <person name="Cary J.W."/>
        </authorList>
    </citation>
    <scope>FUNCTION</scope>
    <scope>DNA-BINDING</scope>
</reference>
<reference key="7">
    <citation type="journal article" date="2002" name="Mycopathologia">
        <title>Association of aflatoxin biosynthesis and sclerotial development in Aspergillus parasiticus.</title>
        <authorList>
            <person name="Chang P.K."/>
            <person name="Bennett J.W."/>
            <person name="Cotty P.J."/>
        </authorList>
    </citation>
    <scope>FUNCTION</scope>
</reference>
<reference key="8">
    <citation type="journal article" date="2003" name="Mol. Genet. Genomics">
        <title>The Aspergillus parasiticus protein AFLJ interacts with the aflatoxin pathway-specific regulator AFLR.</title>
        <authorList>
            <person name="Chang P.K."/>
        </authorList>
    </citation>
    <scope>FUNCTION</scope>
    <scope>INTERACTION WITH AFLS</scope>
    <scope>MUTAGENESIS OF ARG-427; ARG-429 AND ARG-431</scope>
</reference>
<reference key="9">
    <citation type="journal article" date="2004" name="Appl. Environ. Microbiol.">
        <title>veA is required for toxin and sclerotial production in Aspergillus parasiticus.</title>
        <authorList>
            <person name="Calvo A.M."/>
            <person name="Bok J."/>
            <person name="Brooks W."/>
            <person name="Keller N.P."/>
        </authorList>
    </citation>
    <scope>INDUCTION</scope>
</reference>
<reference key="10">
    <citation type="journal article" date="2004" name="J. Biol. Chem.">
        <title>A novel cAMP-response element, CRE1, modulates expression of nor-1 in Aspergillus parasiticus.</title>
        <authorList>
            <person name="Roze L.V."/>
            <person name="Miller M.J."/>
            <person name="Rarick M."/>
            <person name="Mahanti N."/>
            <person name="Linz J.E."/>
        </authorList>
    </citation>
    <scope>FUNCTION</scope>
    <scope>INTERACTION WITH AFLS</scope>
</reference>
<reference key="11">
    <citation type="journal article" date="2005" name="Appl. Environ. Microbiol.">
        <title>Role of cis-acting sites NorL, a TATA box, and AflR1 in nor-1 transcriptional activation in Aspergillus parasiticus.</title>
        <authorList>
            <person name="Miller M.J."/>
            <person name="Roze L.V."/>
            <person name="Trail F."/>
            <person name="Linz J.E."/>
        </authorList>
    </citation>
    <scope>FUNCTION</scope>
</reference>
<reference key="12">
    <citation type="journal article" date="2010" name="Mycotoxin Res.">
        <title>The production of aflatoxin B1 or G 1 by Aspergillus parasiticus at various combinations of temperature and water activity is related to the ratio of aflS to aflR expression.</title>
        <authorList>
            <person name="Schmidt-Heydt M."/>
            <person name="Ruefer C.E."/>
            <person name="Abdel-Hadi A."/>
            <person name="Magan N."/>
            <person name="Geisen R."/>
        </authorList>
    </citation>
    <scope>FUNCTION</scope>
</reference>
<reference key="13">
    <citation type="journal article" date="2012" name="Iran. J. Public Health">
        <title>Effect of curcumin on Aspergillus parasiticus growth and expression of major genes involved in the early and late stages of aflatoxin biosynthesis.</title>
        <authorList>
            <person name="Jahanshiri Z."/>
            <person name="Shams-Ghahfarokhi M."/>
            <person name="Allameh A."/>
            <person name="Razzaghi-Abyaneh M."/>
        </authorList>
    </citation>
    <scope>INDUCTION</scope>
</reference>
<reference key="14">
    <citation type="journal article" date="2012" name="Toxins">
        <title>Association with AflR in endosomes reveals new functions for AflJ in aflatoxin biosynthesis.</title>
        <authorList>
            <person name="Ehrlich K.C."/>
            <person name="Mack B.M."/>
            <person name="Wei Q."/>
            <person name="Li P."/>
            <person name="Roze L.V."/>
            <person name="Dazzo F."/>
            <person name="Cary J.W."/>
            <person name="Bhatnagar D."/>
            <person name="Linz J.E."/>
        </authorList>
    </citation>
    <scope>FUNCTION</scope>
    <scope>INTERACTION WITH AFLS</scope>
    <scope>SUBCELLULAR LOCATION</scope>
</reference>
<reference key="15">
    <citation type="journal article" date="2015" name="Microbiology">
        <title>Reduction of aflatoxin production by Aspergillus flavus and Aspergillus parasiticus in interaction with Streptomyces.</title>
        <authorList>
            <person name="Verheecke C."/>
            <person name="Liboz T."/>
            <person name="Anson P."/>
            <person name="Diaz R."/>
            <person name="Mathieu F."/>
        </authorList>
    </citation>
    <scope>INDUCTION</scope>
</reference>
<evidence type="ECO:0000255" key="1">
    <source>
        <dbReference type="PROSITE-ProRule" id="PRU00227"/>
    </source>
</evidence>
<evidence type="ECO:0000256" key="2">
    <source>
        <dbReference type="SAM" id="MobiDB-lite"/>
    </source>
</evidence>
<evidence type="ECO:0000269" key="3">
    <source>
    </source>
</evidence>
<evidence type="ECO:0000269" key="4">
    <source>
    </source>
</evidence>
<evidence type="ECO:0000269" key="5">
    <source>
    </source>
</evidence>
<evidence type="ECO:0000269" key="6">
    <source>
    </source>
</evidence>
<evidence type="ECO:0000269" key="7">
    <source>
    </source>
</evidence>
<evidence type="ECO:0000269" key="8">
    <source>
    </source>
</evidence>
<evidence type="ECO:0000269" key="9">
    <source>
    </source>
</evidence>
<evidence type="ECO:0000269" key="10">
    <source>
    </source>
</evidence>
<evidence type="ECO:0000269" key="11">
    <source>
    </source>
</evidence>
<evidence type="ECO:0000269" key="12">
    <source>
    </source>
</evidence>
<evidence type="ECO:0000269" key="13">
    <source>
    </source>
</evidence>
<evidence type="ECO:0000269" key="14">
    <source>
    </source>
</evidence>
<evidence type="ECO:0000269" key="15">
    <source>
    </source>
</evidence>
<evidence type="ECO:0000303" key="16">
    <source>
    </source>
</evidence>
<evidence type="ECO:0000303" key="17">
    <source>
    </source>
</evidence>
<evidence type="ECO:0000305" key="18"/>
<sequence length="444" mass="47258">MVDHISPRASPGPIRSSQTRRARKLRDSCTSCASSKVRCTKEKPACARCIERGLACQYMVSKRMGRNPRAPSPLDSTRRPSESLPSAGSEQGLPAHNTYSTPHAHTQAHTHAHSHPQPHPQSHPQSNQPPHALPTPNGSSSVSAIFSHQSPPPLVETQGLGGDLAGQAQSTLSSLTVDSEFGGSLQSMEHGNHADFLAESTGSLFDAFLEVGTPMIDPFLESAPLPPFQARYCCFSLALQTLTCLFPHAPLGCQLRLTDGEDSSCNLMTTDMVISGNKKATDAVRKILGCSCAQDGYLLSMVVLIVLKVLGWYAAAAGTQCTSTAAGGETNSGSCSNSPATVSSGCLTEERVLHHPSMVGEDCVDEEDQPRVAAQLVLSELHRVQSLANLLAKRLQEGGDDAAGIPAHHPASPFSLLGFSGLEANLRHRLRAVSSDIIDYLHRE</sequence>
<feature type="chain" id="PRO_0000438338" description="Aflatoxin biosynthesis regulatory protein">
    <location>
        <begin position="1"/>
        <end position="444"/>
    </location>
</feature>
<feature type="DNA-binding region" description="Zn(2)-C6 fungal-type" evidence="1">
    <location>
        <begin position="29"/>
        <end position="56"/>
    </location>
</feature>
<feature type="region of interest" description="Disordered" evidence="2">
    <location>
        <begin position="1"/>
        <end position="26"/>
    </location>
</feature>
<feature type="region of interest" description="Disordered" evidence="2">
    <location>
        <begin position="64"/>
        <end position="167"/>
    </location>
</feature>
<feature type="compositionally biased region" description="Basic residues" evidence="2">
    <location>
        <begin position="106"/>
        <end position="116"/>
    </location>
</feature>
<feature type="compositionally biased region" description="Low complexity" evidence="2">
    <location>
        <begin position="120"/>
        <end position="130"/>
    </location>
</feature>
<feature type="compositionally biased region" description="Polar residues" evidence="2">
    <location>
        <begin position="136"/>
        <end position="149"/>
    </location>
</feature>
<feature type="mutagenesis site" description="Abolishes interaction with aflS; when associated with L-429 and L-431." evidence="5">
    <original>R</original>
    <variation>L</variation>
    <location>
        <position position="427"/>
    </location>
</feature>
<feature type="mutagenesis site" description="Abolishes interaction with aflS; when associated with L-427 and L-431." evidence="5">
    <original>R</original>
    <variation>L</variation>
    <location>
        <position position="429"/>
    </location>
</feature>
<feature type="mutagenesis site" description="Abolishes interaction with aflS; when associated with L-427 and L-429." evidence="5">
    <original>R</original>
    <variation>L</variation>
    <location>
        <position position="431"/>
    </location>
</feature>
<keyword id="KW-0238">DNA-binding</keyword>
<keyword id="KW-0967">Endosome</keyword>
<keyword id="KW-0479">Metal-binding</keyword>
<keyword id="KW-0539">Nucleus</keyword>
<keyword id="KW-1185">Reference proteome</keyword>
<keyword id="KW-0804">Transcription</keyword>
<keyword id="KW-0805">Transcription regulation</keyword>
<keyword id="KW-0862">Zinc</keyword>